<sequence length="477" mass="52930">MQVLHVCSEMFPLLKTGGLADVIGALPAAQIADGVDVRVLLPGFPDIRRGIPDAHVVSRRDTFAGKISLLFGHYNGVGIYLIDAPHLYERPGSPYHDTNLYAYIDNVLRFALLGWVGCEMACGLDPFWRPDVVHAHDWHAGLAPAYLAARGRPAKSVFTVHNLAYQGMFYAKHMDDIELPWSFFNMHGLEFNGQLSFLKAGLYYADHITAVSPTYAREITEPQFAYGMEGLLRQRHLEGRLSGILNGVDEKIWNPESDLLLASRYTRDTLEEKAENKRQLQIAMGLKVNDKVPLFAVVSRLTNQKGLDLVLEALPGLLEQGGQLALLGAGDPVLQEGFLAAAAEHPGQAGVQIGYHEAFSHRIMGGADVILVPSRFEPCGLTQLYGLKYGTLPLVRRTGGLADTVSDSSLENLADGIASGFVFEDSNAWSLLRAIRRAFVLWSRPSLWRFVQRQAMAMDFSWQVAAKSYRELYYRLK</sequence>
<reference key="1">
    <citation type="journal article" date="2001" name="Nature">
        <title>Complete genome sequence of a multiple drug resistant Salmonella enterica serovar Typhi CT18.</title>
        <authorList>
            <person name="Parkhill J."/>
            <person name="Dougan G."/>
            <person name="James K.D."/>
            <person name="Thomson N.R."/>
            <person name="Pickard D."/>
            <person name="Wain J."/>
            <person name="Churcher C.M."/>
            <person name="Mungall K.L."/>
            <person name="Bentley S.D."/>
            <person name="Holden M.T.G."/>
            <person name="Sebaihia M."/>
            <person name="Baker S."/>
            <person name="Basham D."/>
            <person name="Brooks K."/>
            <person name="Chillingworth T."/>
            <person name="Connerton P."/>
            <person name="Cronin A."/>
            <person name="Davis P."/>
            <person name="Davies R.M."/>
            <person name="Dowd L."/>
            <person name="White N."/>
            <person name="Farrar J."/>
            <person name="Feltwell T."/>
            <person name="Hamlin N."/>
            <person name="Haque A."/>
            <person name="Hien T.T."/>
            <person name="Holroyd S."/>
            <person name="Jagels K."/>
            <person name="Krogh A."/>
            <person name="Larsen T.S."/>
            <person name="Leather S."/>
            <person name="Moule S."/>
            <person name="O'Gaora P."/>
            <person name="Parry C."/>
            <person name="Quail M.A."/>
            <person name="Rutherford K.M."/>
            <person name="Simmonds M."/>
            <person name="Skelton J."/>
            <person name="Stevens K."/>
            <person name="Whitehead S."/>
            <person name="Barrell B.G."/>
        </authorList>
    </citation>
    <scope>NUCLEOTIDE SEQUENCE [LARGE SCALE GENOMIC DNA]</scope>
    <source>
        <strain>CT18</strain>
    </source>
</reference>
<reference key="2">
    <citation type="journal article" date="2003" name="J. Bacteriol.">
        <title>Comparative genomics of Salmonella enterica serovar Typhi strains Ty2 and CT18.</title>
        <authorList>
            <person name="Deng W."/>
            <person name="Liou S.-R."/>
            <person name="Plunkett G. III"/>
            <person name="Mayhew G.F."/>
            <person name="Rose D.J."/>
            <person name="Burland V."/>
            <person name="Kodoyianni V."/>
            <person name="Schwartz D.C."/>
            <person name="Blattner F.R."/>
        </authorList>
    </citation>
    <scope>NUCLEOTIDE SEQUENCE [LARGE SCALE GENOMIC DNA]</scope>
    <source>
        <strain>ATCC 700931 / Ty2</strain>
    </source>
</reference>
<comment type="function">
    <text evidence="1">Synthesizes alpha-1,4-glucan chains using ADP-glucose.</text>
</comment>
<comment type="catalytic activity">
    <reaction evidence="1">
        <text>[(1-&gt;4)-alpha-D-glucosyl](n) + ADP-alpha-D-glucose = [(1-&gt;4)-alpha-D-glucosyl](n+1) + ADP + H(+)</text>
        <dbReference type="Rhea" id="RHEA:18189"/>
        <dbReference type="Rhea" id="RHEA-COMP:9584"/>
        <dbReference type="Rhea" id="RHEA-COMP:9587"/>
        <dbReference type="ChEBI" id="CHEBI:15378"/>
        <dbReference type="ChEBI" id="CHEBI:15444"/>
        <dbReference type="ChEBI" id="CHEBI:57498"/>
        <dbReference type="ChEBI" id="CHEBI:456216"/>
        <dbReference type="EC" id="2.4.1.21"/>
    </reaction>
</comment>
<comment type="pathway">
    <text evidence="1">Glycan biosynthesis; glycogen biosynthesis.</text>
</comment>
<comment type="similarity">
    <text evidence="1">Belongs to the glycosyltransferase 1 family. Bacterial/plant glycogen synthase subfamily.</text>
</comment>
<organism>
    <name type="scientific">Salmonella typhi</name>
    <dbReference type="NCBI Taxonomy" id="90370"/>
    <lineage>
        <taxon>Bacteria</taxon>
        <taxon>Pseudomonadati</taxon>
        <taxon>Pseudomonadota</taxon>
        <taxon>Gammaproteobacteria</taxon>
        <taxon>Enterobacterales</taxon>
        <taxon>Enterobacteriaceae</taxon>
        <taxon>Salmonella</taxon>
    </lineage>
</organism>
<feature type="chain" id="PRO_0000188643" description="Glycogen synthase">
    <location>
        <begin position="1"/>
        <end position="477"/>
    </location>
</feature>
<feature type="binding site" evidence="1">
    <location>
        <position position="15"/>
    </location>
    <ligand>
        <name>ADP-alpha-D-glucose</name>
        <dbReference type="ChEBI" id="CHEBI:57498"/>
    </ligand>
</feature>
<accession>Q8Z232</accession>
<keyword id="KW-0320">Glycogen biosynthesis</keyword>
<keyword id="KW-0328">Glycosyltransferase</keyword>
<keyword id="KW-0808">Transferase</keyword>
<proteinExistence type="inferred from homology"/>
<dbReference type="EC" id="2.4.1.21" evidence="1"/>
<dbReference type="EMBL" id="AL513382">
    <property type="protein sequence ID" value="CAD08093.1"/>
    <property type="molecule type" value="Genomic_DNA"/>
</dbReference>
<dbReference type="EMBL" id="AE014613">
    <property type="protein sequence ID" value="AAO71455.1"/>
    <property type="molecule type" value="Genomic_DNA"/>
</dbReference>
<dbReference type="RefSeq" id="NP_458383.1">
    <property type="nucleotide sequence ID" value="NC_003198.1"/>
</dbReference>
<dbReference type="RefSeq" id="WP_001197660.1">
    <property type="nucleotide sequence ID" value="NZ_WSUR01000001.1"/>
</dbReference>
<dbReference type="SMR" id="Q8Z232"/>
<dbReference type="STRING" id="220341.gene:17588106"/>
<dbReference type="CAZy" id="GT5">
    <property type="family name" value="Glycosyltransferase Family 5"/>
</dbReference>
<dbReference type="KEGG" id="stt:t3985"/>
<dbReference type="KEGG" id="sty:STY4275"/>
<dbReference type="PATRIC" id="fig|220341.7.peg.4368"/>
<dbReference type="eggNOG" id="COG0297">
    <property type="taxonomic scope" value="Bacteria"/>
</dbReference>
<dbReference type="HOGENOM" id="CLU_009583_18_4_6"/>
<dbReference type="OMA" id="TWCPWYM"/>
<dbReference type="OrthoDB" id="9808590at2"/>
<dbReference type="UniPathway" id="UPA00164"/>
<dbReference type="Proteomes" id="UP000000541">
    <property type="component" value="Chromosome"/>
</dbReference>
<dbReference type="Proteomes" id="UP000002670">
    <property type="component" value="Chromosome"/>
</dbReference>
<dbReference type="GO" id="GO:0005829">
    <property type="term" value="C:cytosol"/>
    <property type="evidence" value="ECO:0007669"/>
    <property type="project" value="TreeGrafter"/>
</dbReference>
<dbReference type="GO" id="GO:0009011">
    <property type="term" value="F:alpha-1,4-glucan glucosyltransferase (ADP-glucose donor) activity"/>
    <property type="evidence" value="ECO:0007669"/>
    <property type="project" value="UniProtKB-UniRule"/>
</dbReference>
<dbReference type="GO" id="GO:0004373">
    <property type="term" value="F:alpha-1,4-glucan glucosyltransferase (UDP-glucose donor) activity"/>
    <property type="evidence" value="ECO:0007669"/>
    <property type="project" value="InterPro"/>
</dbReference>
<dbReference type="GO" id="GO:0005978">
    <property type="term" value="P:glycogen biosynthetic process"/>
    <property type="evidence" value="ECO:0007669"/>
    <property type="project" value="UniProtKB-UniRule"/>
</dbReference>
<dbReference type="CDD" id="cd03791">
    <property type="entry name" value="GT5_Glycogen_synthase_DULL1-like"/>
    <property type="match status" value="1"/>
</dbReference>
<dbReference type="FunFam" id="3.40.50.2000:FF:000008">
    <property type="entry name" value="Glycogen synthase"/>
    <property type="match status" value="1"/>
</dbReference>
<dbReference type="FunFam" id="3.40.50.2000:FF:000011">
    <property type="entry name" value="Glycogen synthase"/>
    <property type="match status" value="1"/>
</dbReference>
<dbReference type="Gene3D" id="3.40.50.2000">
    <property type="entry name" value="Glycogen Phosphorylase B"/>
    <property type="match status" value="2"/>
</dbReference>
<dbReference type="HAMAP" id="MF_00484">
    <property type="entry name" value="Glycogen_synth"/>
    <property type="match status" value="1"/>
</dbReference>
<dbReference type="InterPro" id="IPR001296">
    <property type="entry name" value="Glyco_trans_1"/>
</dbReference>
<dbReference type="InterPro" id="IPR011835">
    <property type="entry name" value="GS/SS"/>
</dbReference>
<dbReference type="InterPro" id="IPR013534">
    <property type="entry name" value="Starch_synth_cat_dom"/>
</dbReference>
<dbReference type="NCBIfam" id="TIGR02095">
    <property type="entry name" value="glgA"/>
    <property type="match status" value="1"/>
</dbReference>
<dbReference type="NCBIfam" id="NF001899">
    <property type="entry name" value="PRK00654.1-2"/>
    <property type="match status" value="1"/>
</dbReference>
<dbReference type="PANTHER" id="PTHR45825:SF11">
    <property type="entry name" value="ALPHA AMYLASE DOMAIN-CONTAINING PROTEIN"/>
    <property type="match status" value="1"/>
</dbReference>
<dbReference type="PANTHER" id="PTHR45825">
    <property type="entry name" value="GRANULE-BOUND STARCH SYNTHASE 1, CHLOROPLASTIC/AMYLOPLASTIC"/>
    <property type="match status" value="1"/>
</dbReference>
<dbReference type="Pfam" id="PF08323">
    <property type="entry name" value="Glyco_transf_5"/>
    <property type="match status" value="1"/>
</dbReference>
<dbReference type="Pfam" id="PF00534">
    <property type="entry name" value="Glycos_transf_1"/>
    <property type="match status" value="1"/>
</dbReference>
<dbReference type="SUPFAM" id="SSF53756">
    <property type="entry name" value="UDP-Glycosyltransferase/glycogen phosphorylase"/>
    <property type="match status" value="1"/>
</dbReference>
<protein>
    <recommendedName>
        <fullName evidence="1">Glycogen synthase</fullName>
        <ecNumber evidence="1">2.4.1.21</ecNumber>
    </recommendedName>
    <alternativeName>
        <fullName evidence="1">Starch [bacterial glycogen] synthase</fullName>
    </alternativeName>
</protein>
<gene>
    <name evidence="1" type="primary">glgA</name>
    <name type="ordered locus">STY4275</name>
    <name type="ordered locus">t3985</name>
</gene>
<name>GLGA_SALTI</name>
<evidence type="ECO:0000255" key="1">
    <source>
        <dbReference type="HAMAP-Rule" id="MF_00484"/>
    </source>
</evidence>